<dbReference type="EC" id="3.1.1.29" evidence="1"/>
<dbReference type="EMBL" id="CP000943">
    <property type="protein sequence ID" value="ACA16851.1"/>
    <property type="molecule type" value="Genomic_DNA"/>
</dbReference>
<dbReference type="RefSeq" id="WP_012332260.1">
    <property type="nucleotide sequence ID" value="NC_010511.1"/>
</dbReference>
<dbReference type="SMR" id="B0UGY2"/>
<dbReference type="STRING" id="426117.M446_2393"/>
<dbReference type="KEGG" id="met:M446_2393"/>
<dbReference type="eggNOG" id="COG0193">
    <property type="taxonomic scope" value="Bacteria"/>
</dbReference>
<dbReference type="HOGENOM" id="CLU_062456_1_0_5"/>
<dbReference type="GO" id="GO:0005737">
    <property type="term" value="C:cytoplasm"/>
    <property type="evidence" value="ECO:0007669"/>
    <property type="project" value="UniProtKB-SubCell"/>
</dbReference>
<dbReference type="GO" id="GO:0004045">
    <property type="term" value="F:peptidyl-tRNA hydrolase activity"/>
    <property type="evidence" value="ECO:0007669"/>
    <property type="project" value="UniProtKB-UniRule"/>
</dbReference>
<dbReference type="GO" id="GO:0000049">
    <property type="term" value="F:tRNA binding"/>
    <property type="evidence" value="ECO:0007669"/>
    <property type="project" value="UniProtKB-UniRule"/>
</dbReference>
<dbReference type="GO" id="GO:0006515">
    <property type="term" value="P:protein quality control for misfolded or incompletely synthesized proteins"/>
    <property type="evidence" value="ECO:0007669"/>
    <property type="project" value="UniProtKB-UniRule"/>
</dbReference>
<dbReference type="GO" id="GO:0072344">
    <property type="term" value="P:rescue of stalled ribosome"/>
    <property type="evidence" value="ECO:0007669"/>
    <property type="project" value="UniProtKB-UniRule"/>
</dbReference>
<dbReference type="CDD" id="cd00462">
    <property type="entry name" value="PTH"/>
    <property type="match status" value="1"/>
</dbReference>
<dbReference type="FunFam" id="3.40.50.1470:FF:000001">
    <property type="entry name" value="Peptidyl-tRNA hydrolase"/>
    <property type="match status" value="1"/>
</dbReference>
<dbReference type="Gene3D" id="3.40.50.1470">
    <property type="entry name" value="Peptidyl-tRNA hydrolase"/>
    <property type="match status" value="1"/>
</dbReference>
<dbReference type="HAMAP" id="MF_00083">
    <property type="entry name" value="Pept_tRNA_hydro_bact"/>
    <property type="match status" value="1"/>
</dbReference>
<dbReference type="InterPro" id="IPR001328">
    <property type="entry name" value="Pept_tRNA_hydro"/>
</dbReference>
<dbReference type="InterPro" id="IPR018171">
    <property type="entry name" value="Pept_tRNA_hydro_CS"/>
</dbReference>
<dbReference type="InterPro" id="IPR036416">
    <property type="entry name" value="Pept_tRNA_hydro_sf"/>
</dbReference>
<dbReference type="NCBIfam" id="TIGR00447">
    <property type="entry name" value="pth"/>
    <property type="match status" value="1"/>
</dbReference>
<dbReference type="PANTHER" id="PTHR17224">
    <property type="entry name" value="PEPTIDYL-TRNA HYDROLASE"/>
    <property type="match status" value="1"/>
</dbReference>
<dbReference type="PANTHER" id="PTHR17224:SF1">
    <property type="entry name" value="PEPTIDYL-TRNA HYDROLASE"/>
    <property type="match status" value="1"/>
</dbReference>
<dbReference type="Pfam" id="PF01195">
    <property type="entry name" value="Pept_tRNA_hydro"/>
    <property type="match status" value="1"/>
</dbReference>
<dbReference type="SUPFAM" id="SSF53178">
    <property type="entry name" value="Peptidyl-tRNA hydrolase-like"/>
    <property type="match status" value="1"/>
</dbReference>
<dbReference type="PROSITE" id="PS01195">
    <property type="entry name" value="PEPT_TRNA_HYDROL_1"/>
    <property type="match status" value="1"/>
</dbReference>
<dbReference type="PROSITE" id="PS01196">
    <property type="entry name" value="PEPT_TRNA_HYDROL_2"/>
    <property type="match status" value="1"/>
</dbReference>
<feature type="chain" id="PRO_1000092958" description="Peptidyl-tRNA hydrolase">
    <location>
        <begin position="1"/>
        <end position="203"/>
    </location>
</feature>
<feature type="active site" description="Proton acceptor" evidence="1">
    <location>
        <position position="19"/>
    </location>
</feature>
<feature type="binding site" evidence="1">
    <location>
        <position position="14"/>
    </location>
    <ligand>
        <name>tRNA</name>
        <dbReference type="ChEBI" id="CHEBI:17843"/>
    </ligand>
</feature>
<feature type="binding site" evidence="1">
    <location>
        <position position="64"/>
    </location>
    <ligand>
        <name>tRNA</name>
        <dbReference type="ChEBI" id="CHEBI:17843"/>
    </ligand>
</feature>
<feature type="binding site" evidence="1">
    <location>
        <position position="66"/>
    </location>
    <ligand>
        <name>tRNA</name>
        <dbReference type="ChEBI" id="CHEBI:17843"/>
    </ligand>
</feature>
<feature type="binding site" evidence="1">
    <location>
        <position position="112"/>
    </location>
    <ligand>
        <name>tRNA</name>
        <dbReference type="ChEBI" id="CHEBI:17843"/>
    </ligand>
</feature>
<feature type="site" description="Discriminates between blocked and unblocked aminoacyl-tRNA" evidence="1">
    <location>
        <position position="9"/>
    </location>
</feature>
<feature type="site" description="Stabilizes the basic form of H active site to accept a proton" evidence="1">
    <location>
        <position position="91"/>
    </location>
</feature>
<accession>B0UGY2</accession>
<keyword id="KW-0963">Cytoplasm</keyword>
<keyword id="KW-0378">Hydrolase</keyword>
<keyword id="KW-0694">RNA-binding</keyword>
<keyword id="KW-0820">tRNA-binding</keyword>
<protein>
    <recommendedName>
        <fullName evidence="1">Peptidyl-tRNA hydrolase</fullName>
        <shortName evidence="1">Pth</shortName>
        <ecNumber evidence="1">3.1.1.29</ecNumber>
    </recommendedName>
</protein>
<reference key="1">
    <citation type="submission" date="2008-02" db="EMBL/GenBank/DDBJ databases">
        <title>Complete sequence of chromosome of Methylobacterium sp. 4-46.</title>
        <authorList>
            <consortium name="US DOE Joint Genome Institute"/>
            <person name="Copeland A."/>
            <person name="Lucas S."/>
            <person name="Lapidus A."/>
            <person name="Glavina del Rio T."/>
            <person name="Dalin E."/>
            <person name="Tice H."/>
            <person name="Bruce D."/>
            <person name="Goodwin L."/>
            <person name="Pitluck S."/>
            <person name="Chertkov O."/>
            <person name="Brettin T."/>
            <person name="Detter J.C."/>
            <person name="Han C."/>
            <person name="Kuske C.R."/>
            <person name="Schmutz J."/>
            <person name="Larimer F."/>
            <person name="Land M."/>
            <person name="Hauser L."/>
            <person name="Kyrpides N."/>
            <person name="Ivanova N."/>
            <person name="Marx C.J."/>
            <person name="Richardson P."/>
        </authorList>
    </citation>
    <scope>NUCLEOTIDE SEQUENCE [LARGE SCALE GENOMIC DNA]</scope>
    <source>
        <strain>4-46</strain>
    </source>
</reference>
<proteinExistence type="inferred from homology"/>
<comment type="function">
    <text evidence="1">Hydrolyzes ribosome-free peptidyl-tRNAs (with 1 or more amino acids incorporated), which drop off the ribosome during protein synthesis, or as a result of ribosome stalling.</text>
</comment>
<comment type="function">
    <text evidence="1">Catalyzes the release of premature peptidyl moieties from peptidyl-tRNA molecules trapped in stalled 50S ribosomal subunits, and thus maintains levels of free tRNAs and 50S ribosomes.</text>
</comment>
<comment type="catalytic activity">
    <reaction evidence="1">
        <text>an N-acyl-L-alpha-aminoacyl-tRNA + H2O = an N-acyl-L-amino acid + a tRNA + H(+)</text>
        <dbReference type="Rhea" id="RHEA:54448"/>
        <dbReference type="Rhea" id="RHEA-COMP:10123"/>
        <dbReference type="Rhea" id="RHEA-COMP:13883"/>
        <dbReference type="ChEBI" id="CHEBI:15377"/>
        <dbReference type="ChEBI" id="CHEBI:15378"/>
        <dbReference type="ChEBI" id="CHEBI:59874"/>
        <dbReference type="ChEBI" id="CHEBI:78442"/>
        <dbReference type="ChEBI" id="CHEBI:138191"/>
        <dbReference type="EC" id="3.1.1.29"/>
    </reaction>
</comment>
<comment type="subunit">
    <text evidence="1">Monomer.</text>
</comment>
<comment type="subcellular location">
    <subcellularLocation>
        <location evidence="1">Cytoplasm</location>
    </subcellularLocation>
</comment>
<comment type="similarity">
    <text evidence="1">Belongs to the PTH family.</text>
</comment>
<organism>
    <name type="scientific">Methylobacterium sp. (strain 4-46)</name>
    <dbReference type="NCBI Taxonomy" id="426117"/>
    <lineage>
        <taxon>Bacteria</taxon>
        <taxon>Pseudomonadati</taxon>
        <taxon>Pseudomonadota</taxon>
        <taxon>Alphaproteobacteria</taxon>
        <taxon>Hyphomicrobiales</taxon>
        <taxon>Methylobacteriaceae</taxon>
        <taxon>Methylobacterium</taxon>
    </lineage>
</organism>
<sequence length="203" mass="22389">MRLFVGLGNPGARYAANRHNIGFMALDAVARRHRAAPWRRKFQGEASEAVIGTERVLLLKPETYMNESGRAVAEAQRFYKIALDDVVVFHDELDLAPAKVRVKKGGGNAGHNGLRSITAQCGNEYWRVRLGIGHPGDKALVHAYVLNDFAKAERPWVDDLCDALADHAALLAAGEDANFQNRIHLALQGRGWDDVKRVGDKQA</sequence>
<gene>
    <name evidence="1" type="primary">pth</name>
    <name type="ordered locus">M446_2393</name>
</gene>
<name>PTH_METS4</name>
<evidence type="ECO:0000255" key="1">
    <source>
        <dbReference type="HAMAP-Rule" id="MF_00083"/>
    </source>
</evidence>